<keyword id="KW-0007">Acetylation</keyword>
<keyword id="KW-0273">Eye lens protein</keyword>
<keyword id="KW-0677">Repeat</keyword>
<name>CRYGS_MACFL</name>
<protein>
    <recommendedName>
        <fullName>Gamma-crystallin S</fullName>
    </recommendedName>
    <alternativeName>
        <fullName>Beta-crystallin S</fullName>
    </alternativeName>
    <alternativeName>
        <fullName>Gamma-S-crystallin</fullName>
    </alternativeName>
</protein>
<accession>Q5EF38</accession>
<organism>
    <name type="scientific">Macropus fuliginosus</name>
    <name type="common">Western gray kangaroo</name>
    <name type="synonym">Kangurus fuliginosus</name>
    <dbReference type="NCBI Taxonomy" id="9316"/>
    <lineage>
        <taxon>Eukaryota</taxon>
        <taxon>Metazoa</taxon>
        <taxon>Chordata</taxon>
        <taxon>Craniata</taxon>
        <taxon>Vertebrata</taxon>
        <taxon>Euteleostomi</taxon>
        <taxon>Mammalia</taxon>
        <taxon>Metatheria</taxon>
        <taxon>Diprotodontia</taxon>
        <taxon>Macropodidae</taxon>
        <taxon>Macropus</taxon>
    </lineage>
</organism>
<dbReference type="EMBL" id="AY898646">
    <property type="protein sequence ID" value="AAW82718.1"/>
    <property type="molecule type" value="mRNA"/>
</dbReference>
<dbReference type="SMR" id="Q5EF38"/>
<dbReference type="GO" id="GO:0005212">
    <property type="term" value="F:structural constituent of eye lens"/>
    <property type="evidence" value="ECO:0007669"/>
    <property type="project" value="UniProtKB-KW"/>
</dbReference>
<dbReference type="GO" id="GO:0002088">
    <property type="term" value="P:lens development in camera-type eye"/>
    <property type="evidence" value="ECO:0007669"/>
    <property type="project" value="TreeGrafter"/>
</dbReference>
<dbReference type="GO" id="GO:0007601">
    <property type="term" value="P:visual perception"/>
    <property type="evidence" value="ECO:0007669"/>
    <property type="project" value="TreeGrafter"/>
</dbReference>
<dbReference type="FunFam" id="2.60.20.10:FF:000001">
    <property type="entry name" value="Crystallin gamma S"/>
    <property type="match status" value="1"/>
</dbReference>
<dbReference type="FunFam" id="2.60.20.10:FF:000003">
    <property type="entry name" value="Crystallin gamma S"/>
    <property type="match status" value="1"/>
</dbReference>
<dbReference type="Gene3D" id="2.60.20.10">
    <property type="entry name" value="Crystallins"/>
    <property type="match status" value="2"/>
</dbReference>
<dbReference type="InterPro" id="IPR050252">
    <property type="entry name" value="Beta/Gamma-Crystallin"/>
</dbReference>
<dbReference type="InterPro" id="IPR001064">
    <property type="entry name" value="Beta/gamma_crystallin"/>
</dbReference>
<dbReference type="InterPro" id="IPR011024">
    <property type="entry name" value="G_crystallin-like"/>
</dbReference>
<dbReference type="PANTHER" id="PTHR11818">
    <property type="entry name" value="BETA/GAMMA CRYSTALLIN"/>
    <property type="match status" value="1"/>
</dbReference>
<dbReference type="PANTHER" id="PTHR11818:SF6">
    <property type="entry name" value="GAMMA-CRYSTALLIN S"/>
    <property type="match status" value="1"/>
</dbReference>
<dbReference type="Pfam" id="PF00030">
    <property type="entry name" value="Crystall"/>
    <property type="match status" value="2"/>
</dbReference>
<dbReference type="PRINTS" id="PR01367">
    <property type="entry name" value="BGCRYSTALLIN"/>
</dbReference>
<dbReference type="SMART" id="SM00247">
    <property type="entry name" value="XTALbg"/>
    <property type="match status" value="2"/>
</dbReference>
<dbReference type="SUPFAM" id="SSF49695">
    <property type="entry name" value="gamma-Crystallin-like"/>
    <property type="match status" value="1"/>
</dbReference>
<dbReference type="PROSITE" id="PS50915">
    <property type="entry name" value="CRYSTALLIN_BETA_GAMMA"/>
    <property type="match status" value="4"/>
</dbReference>
<sequence>MSKSVAKITFYDDKNFQGHHYECDSDCPDFHTYLSCCNSIRVTGGAWVVYERPNFSGNMYILTQGDYPDYHHWRGLNDRLSSCKVIHLSSGGQYKLQIFERGDFSGQMYETTEDCPSVMEQFHIREIQSCKVLDGVWVFYEQPNYYGRQYFLDKKEYRKPVDWGSPCSAVQSFRRIME</sequence>
<reference key="1">
    <citation type="journal article" date="2005" name="FEBS J.">
        <title>Gamma-N-crystallin and the evolution of the betagamma-crystallin superfamily in vertebrates.</title>
        <authorList>
            <person name="Wistow G."/>
            <person name="Wyatt K."/>
            <person name="David L."/>
            <person name="Gao C."/>
            <person name="Bateman O."/>
            <person name="Bernstein S."/>
            <person name="Tomarev S."/>
            <person name="Segovia L."/>
            <person name="Slingsby C."/>
            <person name="Vihtelic T."/>
        </authorList>
    </citation>
    <scope>NUCLEOTIDE SEQUENCE [MRNA]</scope>
    <source>
        <tissue>Lens</tissue>
    </source>
</reference>
<proteinExistence type="evidence at transcript level"/>
<gene>
    <name type="primary">CRYGS</name>
</gene>
<comment type="function">
    <text evidence="1">Crystallins are the dominant structural components of the vertebrate eye lens.</text>
</comment>
<comment type="subunit">
    <text evidence="1">Monomer.</text>
</comment>
<comment type="domain">
    <text>Has a two-domain beta-structure, folded into four very similar Greek key motifs.</text>
</comment>
<comment type="similarity">
    <text evidence="4">Belongs to the beta/gamma-crystallin family.</text>
</comment>
<feature type="initiator methionine" description="Removed" evidence="2">
    <location>
        <position position="1"/>
    </location>
</feature>
<feature type="chain" id="PRO_0000289606" description="Gamma-crystallin S">
    <location>
        <begin position="2"/>
        <end position="178"/>
    </location>
</feature>
<feature type="domain" description="Beta/gamma crystallin 'Greek key' 1" evidence="3">
    <location>
        <begin position="6"/>
        <end position="44"/>
    </location>
</feature>
<feature type="domain" description="Beta/gamma crystallin 'Greek key' 2" evidence="3">
    <location>
        <begin position="45"/>
        <end position="87"/>
    </location>
</feature>
<feature type="domain" description="Beta/gamma crystallin 'Greek key' 3" evidence="3">
    <location>
        <begin position="94"/>
        <end position="134"/>
    </location>
</feature>
<feature type="domain" description="Beta/gamma crystallin 'Greek key' 4" evidence="3">
    <location>
        <begin position="135"/>
        <end position="177"/>
    </location>
</feature>
<feature type="region of interest" description="N-terminal arm">
    <location>
        <begin position="2"/>
        <end position="5"/>
    </location>
</feature>
<feature type="region of interest" description="Connecting peptide">
    <location>
        <begin position="88"/>
        <end position="93"/>
    </location>
</feature>
<feature type="modified residue" description="N-acetylserine" evidence="2">
    <location>
        <position position="2"/>
    </location>
</feature>
<evidence type="ECO:0000250" key="1"/>
<evidence type="ECO:0000250" key="2">
    <source>
        <dbReference type="UniProtKB" id="P22914"/>
    </source>
</evidence>
<evidence type="ECO:0000255" key="3">
    <source>
        <dbReference type="PROSITE-ProRule" id="PRU00028"/>
    </source>
</evidence>
<evidence type="ECO:0000305" key="4"/>